<name>UGPE_SALPA</name>
<gene>
    <name type="primary">ugpE</name>
    <name type="ordered locus">SPA3407</name>
</gene>
<proteinExistence type="inferred from homology"/>
<accession>Q5PJL0</accession>
<evidence type="ECO:0000250" key="1">
    <source>
        <dbReference type="UniProtKB" id="P10906"/>
    </source>
</evidence>
<evidence type="ECO:0000255" key="2"/>
<evidence type="ECO:0000255" key="3">
    <source>
        <dbReference type="PROSITE-ProRule" id="PRU00441"/>
    </source>
</evidence>
<evidence type="ECO:0000305" key="4"/>
<comment type="function">
    <text evidence="1">Part of the ABC transporter complex UgpBAEC involved in sn-glycerol-3-phosphate (G3P) import. Probably responsible for the translocation of the substrate across the membrane.</text>
</comment>
<comment type="subunit">
    <text evidence="1">The complex is composed of two ATP-binding proteins (UgpC), two transmembrane proteins (UgpA and UgpE) and a solute-binding protein (UgpB).</text>
</comment>
<comment type="subcellular location">
    <subcellularLocation>
        <location evidence="1">Cell inner membrane</location>
        <topology evidence="2">Multi-pass membrane protein</topology>
    </subcellularLocation>
</comment>
<comment type="similarity">
    <text evidence="4">Belongs to the binding-protein-dependent transport system permease family. UgpAE subfamily.</text>
</comment>
<protein>
    <recommendedName>
        <fullName evidence="1">sn-glycerol-3-phosphate transport system permease protein UgpE</fullName>
    </recommendedName>
</protein>
<sequence length="281" mass="31431">MIENRRGLTIFSHTMLILGIAVILFPLYVAFVAATLDDRAVFETPMTLLPGTQLLENIKTIWVNGVGVNSAPFWLMMLNSFIMAFSITVGKITVSMLSAFAIVWFRFPLRNLFFWMIFITLMLPVEVRIFPTVEVIANLKMLDSYAGLTLPLMASATATFLFRQFFMTLPDELVEAARIDGASPMRFFRDIVLPLSKTNLAALFVITFIYGWNQYLWPLLIITDVNLGTAVAGIKGMIATGEGTTQWNQVMAAMLLTLIPPVVIVLAMQRAFVRGLVDSEK</sequence>
<feature type="chain" id="PRO_0000292682" description="sn-glycerol-3-phosphate transport system permease protein UgpE">
    <location>
        <begin position="1"/>
        <end position="281"/>
    </location>
</feature>
<feature type="transmembrane region" description="Helical" evidence="3">
    <location>
        <begin position="16"/>
        <end position="36"/>
    </location>
</feature>
<feature type="transmembrane region" description="Helical" evidence="3">
    <location>
        <begin position="85"/>
        <end position="105"/>
    </location>
</feature>
<feature type="transmembrane region" description="Helical" evidence="3">
    <location>
        <begin position="113"/>
        <end position="133"/>
    </location>
</feature>
<feature type="transmembrane region" description="Helical" evidence="3">
    <location>
        <begin position="142"/>
        <end position="162"/>
    </location>
</feature>
<feature type="transmembrane region" description="Helical" evidence="3">
    <location>
        <begin position="202"/>
        <end position="222"/>
    </location>
</feature>
<feature type="transmembrane region" description="Helical" evidence="3">
    <location>
        <begin position="247"/>
        <end position="267"/>
    </location>
</feature>
<feature type="domain" description="ABC transmembrane type-1" evidence="3">
    <location>
        <begin position="77"/>
        <end position="268"/>
    </location>
</feature>
<reference key="1">
    <citation type="journal article" date="2004" name="Nat. Genet.">
        <title>Comparison of genome degradation in Paratyphi A and Typhi, human-restricted serovars of Salmonella enterica that cause typhoid.</title>
        <authorList>
            <person name="McClelland M."/>
            <person name="Sanderson K.E."/>
            <person name="Clifton S.W."/>
            <person name="Latreille P."/>
            <person name="Porwollik S."/>
            <person name="Sabo A."/>
            <person name="Meyer R."/>
            <person name="Bieri T."/>
            <person name="Ozersky P."/>
            <person name="McLellan M."/>
            <person name="Harkins C.R."/>
            <person name="Wang C."/>
            <person name="Nguyen C."/>
            <person name="Berghoff A."/>
            <person name="Elliott G."/>
            <person name="Kohlberg S."/>
            <person name="Strong C."/>
            <person name="Du F."/>
            <person name="Carter J."/>
            <person name="Kremizki C."/>
            <person name="Layman D."/>
            <person name="Leonard S."/>
            <person name="Sun H."/>
            <person name="Fulton L."/>
            <person name="Nash W."/>
            <person name="Miner T."/>
            <person name="Minx P."/>
            <person name="Delehaunty K."/>
            <person name="Fronick C."/>
            <person name="Magrini V."/>
            <person name="Nhan M."/>
            <person name="Warren W."/>
            <person name="Florea L."/>
            <person name="Spieth J."/>
            <person name="Wilson R.K."/>
        </authorList>
    </citation>
    <scope>NUCLEOTIDE SEQUENCE [LARGE SCALE GENOMIC DNA]</scope>
    <source>
        <strain>ATCC 9150 / SARB42</strain>
    </source>
</reference>
<dbReference type="EMBL" id="CP000026">
    <property type="protein sequence ID" value="AAV79218.1"/>
    <property type="molecule type" value="Genomic_DNA"/>
</dbReference>
<dbReference type="RefSeq" id="WP_000572196.1">
    <property type="nucleotide sequence ID" value="NC_006511.1"/>
</dbReference>
<dbReference type="SMR" id="Q5PJL0"/>
<dbReference type="KEGG" id="spt:SPA3407"/>
<dbReference type="HOGENOM" id="CLU_016047_1_1_6"/>
<dbReference type="Proteomes" id="UP000008185">
    <property type="component" value="Chromosome"/>
</dbReference>
<dbReference type="GO" id="GO:0005886">
    <property type="term" value="C:plasma membrane"/>
    <property type="evidence" value="ECO:0007669"/>
    <property type="project" value="UniProtKB-SubCell"/>
</dbReference>
<dbReference type="GO" id="GO:0055085">
    <property type="term" value="P:transmembrane transport"/>
    <property type="evidence" value="ECO:0007669"/>
    <property type="project" value="InterPro"/>
</dbReference>
<dbReference type="CDD" id="cd06261">
    <property type="entry name" value="TM_PBP2"/>
    <property type="match status" value="1"/>
</dbReference>
<dbReference type="FunFam" id="1.10.3720.10:FF:000042">
    <property type="entry name" value="sn-glycerol-3-phosphate transport system permease protein UgpE"/>
    <property type="match status" value="1"/>
</dbReference>
<dbReference type="Gene3D" id="1.10.3720.10">
    <property type="entry name" value="MetI-like"/>
    <property type="match status" value="1"/>
</dbReference>
<dbReference type="InterPro" id="IPR000515">
    <property type="entry name" value="MetI-like"/>
</dbReference>
<dbReference type="InterPro" id="IPR035906">
    <property type="entry name" value="MetI-like_sf"/>
</dbReference>
<dbReference type="NCBIfam" id="NF008210">
    <property type="entry name" value="PRK10973.1"/>
    <property type="match status" value="1"/>
</dbReference>
<dbReference type="PANTHER" id="PTHR43744">
    <property type="entry name" value="ABC TRANSPORTER PERMEASE PROTEIN MG189-RELATED-RELATED"/>
    <property type="match status" value="1"/>
</dbReference>
<dbReference type="PANTHER" id="PTHR43744:SF8">
    <property type="entry name" value="SN-GLYCEROL-3-PHOSPHATE TRANSPORT SYSTEM PERMEASE PROTEIN UGPE"/>
    <property type="match status" value="1"/>
</dbReference>
<dbReference type="Pfam" id="PF00528">
    <property type="entry name" value="BPD_transp_1"/>
    <property type="match status" value="1"/>
</dbReference>
<dbReference type="SUPFAM" id="SSF161098">
    <property type="entry name" value="MetI-like"/>
    <property type="match status" value="1"/>
</dbReference>
<dbReference type="PROSITE" id="PS50928">
    <property type="entry name" value="ABC_TM1"/>
    <property type="match status" value="1"/>
</dbReference>
<keyword id="KW-0997">Cell inner membrane</keyword>
<keyword id="KW-1003">Cell membrane</keyword>
<keyword id="KW-0472">Membrane</keyword>
<keyword id="KW-0812">Transmembrane</keyword>
<keyword id="KW-1133">Transmembrane helix</keyword>
<keyword id="KW-0813">Transport</keyword>
<organism>
    <name type="scientific">Salmonella paratyphi A (strain ATCC 9150 / SARB42)</name>
    <dbReference type="NCBI Taxonomy" id="295319"/>
    <lineage>
        <taxon>Bacteria</taxon>
        <taxon>Pseudomonadati</taxon>
        <taxon>Pseudomonadota</taxon>
        <taxon>Gammaproteobacteria</taxon>
        <taxon>Enterobacterales</taxon>
        <taxon>Enterobacteriaceae</taxon>
        <taxon>Salmonella</taxon>
    </lineage>
</organism>